<accession>Q8DHS1</accession>
<protein>
    <recommendedName>
        <fullName evidence="1">Methionyl-tRNA formyltransferase</fullName>
        <ecNumber evidence="1">2.1.2.9</ecNumber>
    </recommendedName>
</protein>
<gene>
    <name evidence="1" type="primary">fmt</name>
    <name type="ordered locus">tlr1874</name>
</gene>
<sequence length="331" mass="36445">MNIVYFGTPEFALAPLQRLLQTETYQVLGVVTQPDRRRGRGNQLSPSPVKAFALRHGLPIWQPPRLRQDPQLPEVLRSLAADVFVVVAYGQILPQSILDIPRYGCINIHGSLLPRYRGAAPIQWALYHGEEETGVTTMLMDAGLDTGPMLLKRKVRIHLEDNATTLSAKLSETGADLLLDTLQQLPQLQAEPQNDAEATYAPLIQKSDYAIDWGRSALALHNQVRAFYPYAYTQWQGTALKILQTWPLIPEVAAKLPEPLQSYVREPEAAAPPGTVLALIKGWGPVVQTGKGPLLLSQVQLSGRKAQSGWDFVNGVRLAIATQFAIVPSAL</sequence>
<reference key="1">
    <citation type="journal article" date="2002" name="DNA Res.">
        <title>Complete genome structure of the thermophilic cyanobacterium Thermosynechococcus elongatus BP-1.</title>
        <authorList>
            <person name="Nakamura Y."/>
            <person name="Kaneko T."/>
            <person name="Sato S."/>
            <person name="Ikeuchi M."/>
            <person name="Katoh H."/>
            <person name="Sasamoto S."/>
            <person name="Watanabe A."/>
            <person name="Iriguchi M."/>
            <person name="Kawashima K."/>
            <person name="Kimura T."/>
            <person name="Kishida Y."/>
            <person name="Kiyokawa C."/>
            <person name="Kohara M."/>
            <person name="Matsumoto M."/>
            <person name="Matsuno A."/>
            <person name="Nakazaki N."/>
            <person name="Shimpo S."/>
            <person name="Sugimoto M."/>
            <person name="Takeuchi C."/>
            <person name="Yamada M."/>
            <person name="Tabata S."/>
        </authorList>
    </citation>
    <scope>NUCLEOTIDE SEQUENCE [LARGE SCALE GENOMIC DNA]</scope>
    <source>
        <strain>NIES-2133 / IAM M-273 / BP-1</strain>
    </source>
</reference>
<proteinExistence type="inferred from homology"/>
<name>FMT_THEVB</name>
<comment type="function">
    <text evidence="1">Attaches a formyl group to the free amino group of methionyl-tRNA(fMet). The formyl group appears to play a dual role in the initiator identity of N-formylmethionyl-tRNA by promoting its recognition by IF2 and preventing the misappropriation of this tRNA by the elongation apparatus.</text>
</comment>
<comment type="catalytic activity">
    <reaction evidence="1">
        <text>L-methionyl-tRNA(fMet) + (6R)-10-formyltetrahydrofolate = N-formyl-L-methionyl-tRNA(fMet) + (6S)-5,6,7,8-tetrahydrofolate + H(+)</text>
        <dbReference type="Rhea" id="RHEA:24380"/>
        <dbReference type="Rhea" id="RHEA-COMP:9952"/>
        <dbReference type="Rhea" id="RHEA-COMP:9953"/>
        <dbReference type="ChEBI" id="CHEBI:15378"/>
        <dbReference type="ChEBI" id="CHEBI:57453"/>
        <dbReference type="ChEBI" id="CHEBI:78530"/>
        <dbReference type="ChEBI" id="CHEBI:78844"/>
        <dbReference type="ChEBI" id="CHEBI:195366"/>
        <dbReference type="EC" id="2.1.2.9"/>
    </reaction>
</comment>
<comment type="similarity">
    <text evidence="1">Belongs to the Fmt family.</text>
</comment>
<comment type="sequence caution" evidence="2">
    <conflict type="erroneous initiation">
        <sequence resource="EMBL-CDS" id="BAC09426"/>
    </conflict>
</comment>
<organism>
    <name type="scientific">Thermosynechococcus vestitus (strain NIES-2133 / IAM M-273 / BP-1)</name>
    <dbReference type="NCBI Taxonomy" id="197221"/>
    <lineage>
        <taxon>Bacteria</taxon>
        <taxon>Bacillati</taxon>
        <taxon>Cyanobacteriota</taxon>
        <taxon>Cyanophyceae</taxon>
        <taxon>Acaryochloridales</taxon>
        <taxon>Thermosynechococcaceae</taxon>
        <taxon>Thermosynechococcus</taxon>
    </lineage>
</organism>
<evidence type="ECO:0000255" key="1">
    <source>
        <dbReference type="HAMAP-Rule" id="MF_00182"/>
    </source>
</evidence>
<evidence type="ECO:0000305" key="2"/>
<feature type="chain" id="PRO_0000083067" description="Methionyl-tRNA formyltransferase">
    <location>
        <begin position="1"/>
        <end position="331"/>
    </location>
</feature>
<feature type="binding site" evidence="1">
    <location>
        <begin position="111"/>
        <end position="114"/>
    </location>
    <ligand>
        <name>(6S)-5,6,7,8-tetrahydrofolate</name>
        <dbReference type="ChEBI" id="CHEBI:57453"/>
    </ligand>
</feature>
<keyword id="KW-0648">Protein biosynthesis</keyword>
<keyword id="KW-1185">Reference proteome</keyword>
<keyword id="KW-0808">Transferase</keyword>
<dbReference type="EC" id="2.1.2.9" evidence="1"/>
<dbReference type="EMBL" id="BA000039">
    <property type="protein sequence ID" value="BAC09426.1"/>
    <property type="status" value="ALT_INIT"/>
    <property type="molecule type" value="Genomic_DNA"/>
</dbReference>
<dbReference type="RefSeq" id="NP_682664.1">
    <property type="nucleotide sequence ID" value="NC_004113.1"/>
</dbReference>
<dbReference type="RefSeq" id="WP_164921198.1">
    <property type="nucleotide sequence ID" value="NC_004113.1"/>
</dbReference>
<dbReference type="SMR" id="Q8DHS1"/>
<dbReference type="STRING" id="197221.gene:10748480"/>
<dbReference type="EnsemblBacteria" id="BAC09426">
    <property type="protein sequence ID" value="BAC09426"/>
    <property type="gene ID" value="BAC09426"/>
</dbReference>
<dbReference type="KEGG" id="tel:tlr1874"/>
<dbReference type="PATRIC" id="fig|197221.4.peg.1957"/>
<dbReference type="eggNOG" id="COG0223">
    <property type="taxonomic scope" value="Bacteria"/>
</dbReference>
<dbReference type="Proteomes" id="UP000000440">
    <property type="component" value="Chromosome"/>
</dbReference>
<dbReference type="GO" id="GO:0005829">
    <property type="term" value="C:cytosol"/>
    <property type="evidence" value="ECO:0007669"/>
    <property type="project" value="TreeGrafter"/>
</dbReference>
<dbReference type="GO" id="GO:0004479">
    <property type="term" value="F:methionyl-tRNA formyltransferase activity"/>
    <property type="evidence" value="ECO:0007669"/>
    <property type="project" value="UniProtKB-UniRule"/>
</dbReference>
<dbReference type="CDD" id="cd08646">
    <property type="entry name" value="FMT_core_Met-tRNA-FMT_N"/>
    <property type="match status" value="1"/>
</dbReference>
<dbReference type="CDD" id="cd08704">
    <property type="entry name" value="Met_tRNA_FMT_C"/>
    <property type="match status" value="1"/>
</dbReference>
<dbReference type="FunFam" id="3.40.50.12230:FF:000001">
    <property type="entry name" value="Methionyl-tRNA formyltransferase"/>
    <property type="match status" value="1"/>
</dbReference>
<dbReference type="Gene3D" id="3.40.50.12230">
    <property type="match status" value="1"/>
</dbReference>
<dbReference type="HAMAP" id="MF_00182">
    <property type="entry name" value="Formyl_trans"/>
    <property type="match status" value="1"/>
</dbReference>
<dbReference type="InterPro" id="IPR005794">
    <property type="entry name" value="Fmt"/>
</dbReference>
<dbReference type="InterPro" id="IPR005793">
    <property type="entry name" value="Formyl_trans_C"/>
</dbReference>
<dbReference type="InterPro" id="IPR002376">
    <property type="entry name" value="Formyl_transf_N"/>
</dbReference>
<dbReference type="InterPro" id="IPR036477">
    <property type="entry name" value="Formyl_transf_N_sf"/>
</dbReference>
<dbReference type="InterPro" id="IPR011034">
    <property type="entry name" value="Formyl_transferase-like_C_sf"/>
</dbReference>
<dbReference type="InterPro" id="IPR001555">
    <property type="entry name" value="GART_AS"/>
</dbReference>
<dbReference type="InterPro" id="IPR044135">
    <property type="entry name" value="Met-tRNA-FMT_C"/>
</dbReference>
<dbReference type="InterPro" id="IPR041711">
    <property type="entry name" value="Met-tRNA-FMT_N"/>
</dbReference>
<dbReference type="NCBIfam" id="TIGR00460">
    <property type="entry name" value="fmt"/>
    <property type="match status" value="1"/>
</dbReference>
<dbReference type="PANTHER" id="PTHR11138">
    <property type="entry name" value="METHIONYL-TRNA FORMYLTRANSFERASE"/>
    <property type="match status" value="1"/>
</dbReference>
<dbReference type="PANTHER" id="PTHR11138:SF5">
    <property type="entry name" value="METHIONYL-TRNA FORMYLTRANSFERASE, MITOCHONDRIAL"/>
    <property type="match status" value="1"/>
</dbReference>
<dbReference type="Pfam" id="PF02911">
    <property type="entry name" value="Formyl_trans_C"/>
    <property type="match status" value="1"/>
</dbReference>
<dbReference type="Pfam" id="PF00551">
    <property type="entry name" value="Formyl_trans_N"/>
    <property type="match status" value="1"/>
</dbReference>
<dbReference type="SUPFAM" id="SSF50486">
    <property type="entry name" value="FMT C-terminal domain-like"/>
    <property type="match status" value="1"/>
</dbReference>
<dbReference type="SUPFAM" id="SSF53328">
    <property type="entry name" value="Formyltransferase"/>
    <property type="match status" value="1"/>
</dbReference>
<dbReference type="PROSITE" id="PS00373">
    <property type="entry name" value="GART"/>
    <property type="match status" value="1"/>
</dbReference>